<accession>C6DFH7</accession>
<feature type="chain" id="PRO_1000203344" description="Phosphoglycerate kinase">
    <location>
        <begin position="1"/>
        <end position="387"/>
    </location>
</feature>
<feature type="binding site" evidence="1">
    <location>
        <begin position="21"/>
        <end position="23"/>
    </location>
    <ligand>
        <name>substrate</name>
    </ligand>
</feature>
<feature type="binding site" evidence="1">
    <location>
        <position position="36"/>
    </location>
    <ligand>
        <name>substrate</name>
    </ligand>
</feature>
<feature type="binding site" evidence="1">
    <location>
        <begin position="59"/>
        <end position="62"/>
    </location>
    <ligand>
        <name>substrate</name>
    </ligand>
</feature>
<feature type="binding site" evidence="1">
    <location>
        <position position="113"/>
    </location>
    <ligand>
        <name>substrate</name>
    </ligand>
</feature>
<feature type="binding site" evidence="1">
    <location>
        <position position="146"/>
    </location>
    <ligand>
        <name>substrate</name>
    </ligand>
</feature>
<feature type="binding site" evidence="1">
    <location>
        <position position="197"/>
    </location>
    <ligand>
        <name>ATP</name>
        <dbReference type="ChEBI" id="CHEBI:30616"/>
    </ligand>
</feature>
<feature type="binding site" evidence="1">
    <location>
        <position position="314"/>
    </location>
    <ligand>
        <name>ATP</name>
        <dbReference type="ChEBI" id="CHEBI:30616"/>
    </ligand>
</feature>
<feature type="binding site" evidence="1">
    <location>
        <begin position="340"/>
        <end position="343"/>
    </location>
    <ligand>
        <name>ATP</name>
        <dbReference type="ChEBI" id="CHEBI:30616"/>
    </ligand>
</feature>
<protein>
    <recommendedName>
        <fullName evidence="1">Phosphoglycerate kinase</fullName>
        <ecNumber evidence="1">2.7.2.3</ecNumber>
    </recommendedName>
</protein>
<organism>
    <name type="scientific">Pectobacterium carotovorum subsp. carotovorum (strain PC1)</name>
    <dbReference type="NCBI Taxonomy" id="561230"/>
    <lineage>
        <taxon>Bacteria</taxon>
        <taxon>Pseudomonadati</taxon>
        <taxon>Pseudomonadota</taxon>
        <taxon>Gammaproteobacteria</taxon>
        <taxon>Enterobacterales</taxon>
        <taxon>Pectobacteriaceae</taxon>
        <taxon>Pectobacterium</taxon>
    </lineage>
</organism>
<reference key="1">
    <citation type="submission" date="2009-07" db="EMBL/GenBank/DDBJ databases">
        <title>Complete sequence of Pectobacterium carotovorum subsp. carotovorum PC1.</title>
        <authorList>
            <consortium name="US DOE Joint Genome Institute"/>
            <person name="Lucas S."/>
            <person name="Copeland A."/>
            <person name="Lapidus A."/>
            <person name="Glavina del Rio T."/>
            <person name="Tice H."/>
            <person name="Bruce D."/>
            <person name="Goodwin L."/>
            <person name="Pitluck S."/>
            <person name="Munk A.C."/>
            <person name="Brettin T."/>
            <person name="Detter J.C."/>
            <person name="Han C."/>
            <person name="Tapia R."/>
            <person name="Larimer F."/>
            <person name="Land M."/>
            <person name="Hauser L."/>
            <person name="Kyrpides N."/>
            <person name="Mikhailova N."/>
            <person name="Balakrishnan V."/>
            <person name="Glasner J."/>
            <person name="Perna N.T."/>
        </authorList>
    </citation>
    <scope>NUCLEOTIDE SEQUENCE [LARGE SCALE GENOMIC DNA]</scope>
    <source>
        <strain>PC1</strain>
    </source>
</reference>
<name>PGK_PECCP</name>
<comment type="catalytic activity">
    <reaction evidence="1">
        <text>(2R)-3-phosphoglycerate + ATP = (2R)-3-phospho-glyceroyl phosphate + ADP</text>
        <dbReference type="Rhea" id="RHEA:14801"/>
        <dbReference type="ChEBI" id="CHEBI:30616"/>
        <dbReference type="ChEBI" id="CHEBI:57604"/>
        <dbReference type="ChEBI" id="CHEBI:58272"/>
        <dbReference type="ChEBI" id="CHEBI:456216"/>
        <dbReference type="EC" id="2.7.2.3"/>
    </reaction>
</comment>
<comment type="pathway">
    <text evidence="1">Carbohydrate degradation; glycolysis; pyruvate from D-glyceraldehyde 3-phosphate: step 2/5.</text>
</comment>
<comment type="subunit">
    <text evidence="1">Monomer.</text>
</comment>
<comment type="subcellular location">
    <subcellularLocation>
        <location evidence="1">Cytoplasm</location>
    </subcellularLocation>
</comment>
<comment type="similarity">
    <text evidence="1">Belongs to the phosphoglycerate kinase family.</text>
</comment>
<proteinExistence type="inferred from homology"/>
<dbReference type="EC" id="2.7.2.3" evidence="1"/>
<dbReference type="EMBL" id="CP001657">
    <property type="protein sequence ID" value="ACT14716.1"/>
    <property type="molecule type" value="Genomic_DNA"/>
</dbReference>
<dbReference type="RefSeq" id="WP_015841830.1">
    <property type="nucleotide sequence ID" value="NC_012917.1"/>
</dbReference>
<dbReference type="SMR" id="C6DFH7"/>
<dbReference type="STRING" id="561230.PC1_3701"/>
<dbReference type="GeneID" id="67792489"/>
<dbReference type="KEGG" id="pct:PC1_3701"/>
<dbReference type="eggNOG" id="COG0126">
    <property type="taxonomic scope" value="Bacteria"/>
</dbReference>
<dbReference type="HOGENOM" id="CLU_025427_0_2_6"/>
<dbReference type="OrthoDB" id="9808460at2"/>
<dbReference type="UniPathway" id="UPA00109">
    <property type="reaction ID" value="UER00185"/>
</dbReference>
<dbReference type="Proteomes" id="UP000002736">
    <property type="component" value="Chromosome"/>
</dbReference>
<dbReference type="GO" id="GO:0005829">
    <property type="term" value="C:cytosol"/>
    <property type="evidence" value="ECO:0007669"/>
    <property type="project" value="TreeGrafter"/>
</dbReference>
<dbReference type="GO" id="GO:0043531">
    <property type="term" value="F:ADP binding"/>
    <property type="evidence" value="ECO:0007669"/>
    <property type="project" value="TreeGrafter"/>
</dbReference>
<dbReference type="GO" id="GO:0005524">
    <property type="term" value="F:ATP binding"/>
    <property type="evidence" value="ECO:0007669"/>
    <property type="project" value="UniProtKB-KW"/>
</dbReference>
<dbReference type="GO" id="GO:0004618">
    <property type="term" value="F:phosphoglycerate kinase activity"/>
    <property type="evidence" value="ECO:0007669"/>
    <property type="project" value="UniProtKB-UniRule"/>
</dbReference>
<dbReference type="GO" id="GO:0006094">
    <property type="term" value="P:gluconeogenesis"/>
    <property type="evidence" value="ECO:0007669"/>
    <property type="project" value="TreeGrafter"/>
</dbReference>
<dbReference type="GO" id="GO:0006096">
    <property type="term" value="P:glycolytic process"/>
    <property type="evidence" value="ECO:0007669"/>
    <property type="project" value="UniProtKB-UniRule"/>
</dbReference>
<dbReference type="FunFam" id="3.40.50.1260:FF:000001">
    <property type="entry name" value="Phosphoglycerate kinase"/>
    <property type="match status" value="1"/>
</dbReference>
<dbReference type="FunFam" id="3.40.50.1260:FF:000002">
    <property type="entry name" value="Phosphoglycerate kinase"/>
    <property type="match status" value="1"/>
</dbReference>
<dbReference type="Gene3D" id="3.40.50.1260">
    <property type="entry name" value="Phosphoglycerate kinase, N-terminal domain"/>
    <property type="match status" value="2"/>
</dbReference>
<dbReference type="HAMAP" id="MF_00145">
    <property type="entry name" value="Phosphoglyc_kinase"/>
    <property type="match status" value="1"/>
</dbReference>
<dbReference type="InterPro" id="IPR001576">
    <property type="entry name" value="Phosphoglycerate_kinase"/>
</dbReference>
<dbReference type="InterPro" id="IPR015911">
    <property type="entry name" value="Phosphoglycerate_kinase_CS"/>
</dbReference>
<dbReference type="InterPro" id="IPR015824">
    <property type="entry name" value="Phosphoglycerate_kinase_N"/>
</dbReference>
<dbReference type="InterPro" id="IPR036043">
    <property type="entry name" value="Phosphoglycerate_kinase_sf"/>
</dbReference>
<dbReference type="PANTHER" id="PTHR11406">
    <property type="entry name" value="PHOSPHOGLYCERATE KINASE"/>
    <property type="match status" value="1"/>
</dbReference>
<dbReference type="PANTHER" id="PTHR11406:SF23">
    <property type="entry name" value="PHOSPHOGLYCERATE KINASE 1, CHLOROPLASTIC-RELATED"/>
    <property type="match status" value="1"/>
</dbReference>
<dbReference type="Pfam" id="PF00162">
    <property type="entry name" value="PGK"/>
    <property type="match status" value="1"/>
</dbReference>
<dbReference type="PIRSF" id="PIRSF000724">
    <property type="entry name" value="Pgk"/>
    <property type="match status" value="1"/>
</dbReference>
<dbReference type="PRINTS" id="PR00477">
    <property type="entry name" value="PHGLYCKINASE"/>
</dbReference>
<dbReference type="SUPFAM" id="SSF53748">
    <property type="entry name" value="Phosphoglycerate kinase"/>
    <property type="match status" value="1"/>
</dbReference>
<dbReference type="PROSITE" id="PS00111">
    <property type="entry name" value="PGLYCERATE_KINASE"/>
    <property type="match status" value="1"/>
</dbReference>
<sequence length="387" mass="41185">MSVIKMTDLDLAGKRVLIRADLNVPVKEGKVTSDARIRASLPTIEIALKQGARVMVTSHLGRPTEGEYNEEFSLLPVVDYLKEKLSSPVRLAKDYLDGVDVAEGELVVLENVRFNKGEKKDDEVLSKKYAALCDVFVMDAFGTAHRAQASTHGVGKFAPIACAGPLLSGELEALGKALSEPARPMVAIVGGSKVSTKLTVLDSLSKIADQLIVGGGIANTFVAAQGHNVGKSLYEADLIPEAKKLLETCDIPVPSDVRVASEFSETATATLKSVTAIKDEEQILDLGDVSAERLAEILKNAKTILWNGPVGVFEFPNFRKGTETIARAIAESDAFSIAGGGDTLAAIDLFGIADKISYISTGGGAFLEFVEGKKLPAVVMLEERAKQ</sequence>
<evidence type="ECO:0000255" key="1">
    <source>
        <dbReference type="HAMAP-Rule" id="MF_00145"/>
    </source>
</evidence>
<keyword id="KW-0067">ATP-binding</keyword>
<keyword id="KW-0963">Cytoplasm</keyword>
<keyword id="KW-0324">Glycolysis</keyword>
<keyword id="KW-0418">Kinase</keyword>
<keyword id="KW-0547">Nucleotide-binding</keyword>
<keyword id="KW-0808">Transferase</keyword>
<gene>
    <name evidence="1" type="primary">pgk</name>
    <name type="ordered locus">PC1_3701</name>
</gene>